<organism>
    <name type="scientific">Bos taurus</name>
    <name type="common">Bovine</name>
    <dbReference type="NCBI Taxonomy" id="9913"/>
    <lineage>
        <taxon>Eukaryota</taxon>
        <taxon>Metazoa</taxon>
        <taxon>Chordata</taxon>
        <taxon>Craniata</taxon>
        <taxon>Vertebrata</taxon>
        <taxon>Euteleostomi</taxon>
        <taxon>Mammalia</taxon>
        <taxon>Eutheria</taxon>
        <taxon>Laurasiatheria</taxon>
        <taxon>Artiodactyla</taxon>
        <taxon>Ruminantia</taxon>
        <taxon>Pecora</taxon>
        <taxon>Bovidae</taxon>
        <taxon>Bovinae</taxon>
        <taxon>Bos</taxon>
    </lineage>
</organism>
<gene>
    <name evidence="2" type="primary">DLAT</name>
</gene>
<dbReference type="EC" id="2.3.1.12" evidence="11"/>
<dbReference type="EMBL" id="GJ062397">
    <property type="protein sequence ID" value="DAA22403.1"/>
    <property type="molecule type" value="Genomic_DNA"/>
</dbReference>
<dbReference type="RefSeq" id="NP_001192659.2">
    <property type="nucleotide sequence ID" value="NM_001205730.2"/>
</dbReference>
<dbReference type="PDB" id="7UOM">
    <property type="method" value="EM"/>
    <property type="resolution" value="3.80 A"/>
    <property type="chains" value="01/02/03/04/05/0z/1a/1b/1c/1d/1e/1f/1g/1h/1i/1j/1k/1l/1m/1n/1o/1p/1q/1r/1s/1t/1u/1v/1w/1x=1-647"/>
</dbReference>
<dbReference type="PDBsum" id="7UOM"/>
<dbReference type="EMDB" id="EMD-26650"/>
<dbReference type="SMR" id="P11180"/>
<dbReference type="CORUM" id="P11180"/>
<dbReference type="FunCoup" id="P11180">
    <property type="interactions" value="4"/>
</dbReference>
<dbReference type="SwissPalm" id="P11180"/>
<dbReference type="PaxDb" id="9913-ENSBTAP00000014176"/>
<dbReference type="Ensembl" id="ENSBTAT00000014176.6">
    <property type="protein sequence ID" value="ENSBTAP00000014176.5"/>
    <property type="gene ID" value="ENSBTAG00000010709.7"/>
</dbReference>
<dbReference type="GeneID" id="512723"/>
<dbReference type="KEGG" id="bta:512723"/>
<dbReference type="CTD" id="1737"/>
<dbReference type="VEuPathDB" id="HostDB:ENSBTAG00000010709"/>
<dbReference type="VGNC" id="VGNC:109392">
    <property type="gene designation" value="DLAT"/>
</dbReference>
<dbReference type="eggNOG" id="KOG0557">
    <property type="taxonomic scope" value="Eukaryota"/>
</dbReference>
<dbReference type="GeneTree" id="ENSGT00940000154943"/>
<dbReference type="HOGENOM" id="CLU_016733_10_2_1"/>
<dbReference type="InParanoid" id="P11180"/>
<dbReference type="OMA" id="TMEFESF"/>
<dbReference type="OrthoDB" id="537444at2759"/>
<dbReference type="TreeFam" id="TF106145"/>
<dbReference type="Reactome" id="R-BTA-204174">
    <property type="pathway name" value="Regulation of pyruvate dehydrogenase (PDH) complex"/>
</dbReference>
<dbReference type="Reactome" id="R-BTA-5362517">
    <property type="pathway name" value="Signaling by Retinoic Acid"/>
</dbReference>
<dbReference type="Reactome" id="R-BTA-9857492">
    <property type="pathway name" value="Protein lipoylation"/>
</dbReference>
<dbReference type="Reactome" id="R-BTA-9861559">
    <property type="pathway name" value="PDH complex synthesizes acetyl-CoA from PYR"/>
</dbReference>
<dbReference type="Proteomes" id="UP000009136">
    <property type="component" value="Chromosome 15"/>
</dbReference>
<dbReference type="Bgee" id="ENSBTAG00000010709">
    <property type="expression patterns" value="Expressed in cardiac ventricle and 104 other cell types or tissues"/>
</dbReference>
<dbReference type="GO" id="GO:0005759">
    <property type="term" value="C:mitochondrial matrix"/>
    <property type="evidence" value="ECO:0007669"/>
    <property type="project" value="UniProtKB-SubCell"/>
</dbReference>
<dbReference type="GO" id="GO:0045254">
    <property type="term" value="C:pyruvate dehydrogenase complex"/>
    <property type="evidence" value="ECO:0007669"/>
    <property type="project" value="Ensembl"/>
</dbReference>
<dbReference type="GO" id="GO:0004742">
    <property type="term" value="F:dihydrolipoyllysine-residue acetyltransferase activity"/>
    <property type="evidence" value="ECO:0000314"/>
    <property type="project" value="UniProtKB"/>
</dbReference>
<dbReference type="GO" id="GO:0042802">
    <property type="term" value="F:identical protein binding"/>
    <property type="evidence" value="ECO:0007669"/>
    <property type="project" value="Ensembl"/>
</dbReference>
<dbReference type="GO" id="GO:0034604">
    <property type="term" value="F:pyruvate dehydrogenase (NAD+) activity"/>
    <property type="evidence" value="ECO:0007669"/>
    <property type="project" value="Ensembl"/>
</dbReference>
<dbReference type="GO" id="GO:0006006">
    <property type="term" value="P:glucose metabolic process"/>
    <property type="evidence" value="ECO:0007669"/>
    <property type="project" value="UniProtKB-KW"/>
</dbReference>
<dbReference type="GO" id="GO:0042867">
    <property type="term" value="P:pyruvate catabolic process"/>
    <property type="evidence" value="ECO:0007669"/>
    <property type="project" value="Ensembl"/>
</dbReference>
<dbReference type="GO" id="GO:0006099">
    <property type="term" value="P:tricarboxylic acid cycle"/>
    <property type="evidence" value="ECO:0000314"/>
    <property type="project" value="UniProtKB"/>
</dbReference>
<dbReference type="CDD" id="cd06849">
    <property type="entry name" value="lipoyl_domain"/>
    <property type="match status" value="2"/>
</dbReference>
<dbReference type="FunFam" id="2.40.50.100:FF:000010">
    <property type="entry name" value="Acetyltransferase component of pyruvate dehydrogenase complex"/>
    <property type="match status" value="2"/>
</dbReference>
<dbReference type="FunFam" id="3.30.559.10:FF:000003">
    <property type="entry name" value="Acetyltransferase component of pyruvate dehydrogenase complex"/>
    <property type="match status" value="1"/>
</dbReference>
<dbReference type="FunFam" id="4.10.320.10:FF:000005">
    <property type="entry name" value="Acetyltransferase component of pyruvate dehydrogenase complex"/>
    <property type="match status" value="1"/>
</dbReference>
<dbReference type="Gene3D" id="2.40.50.100">
    <property type="match status" value="2"/>
</dbReference>
<dbReference type="Gene3D" id="3.30.559.10">
    <property type="entry name" value="Chloramphenicol acetyltransferase-like domain"/>
    <property type="match status" value="1"/>
</dbReference>
<dbReference type="Gene3D" id="4.10.320.10">
    <property type="entry name" value="E3-binding domain"/>
    <property type="match status" value="1"/>
</dbReference>
<dbReference type="InterPro" id="IPR003016">
    <property type="entry name" value="2-oxoA_DH_lipoyl-BS"/>
</dbReference>
<dbReference type="InterPro" id="IPR001078">
    <property type="entry name" value="2-oxoacid_DH_actylTfrase"/>
</dbReference>
<dbReference type="InterPro" id="IPR000089">
    <property type="entry name" value="Biotin_lipoyl"/>
</dbReference>
<dbReference type="InterPro" id="IPR023213">
    <property type="entry name" value="CAT-like_dom_sf"/>
</dbReference>
<dbReference type="InterPro" id="IPR045257">
    <property type="entry name" value="E2/Pdx1"/>
</dbReference>
<dbReference type="InterPro" id="IPR036625">
    <property type="entry name" value="E3-bd_dom_sf"/>
</dbReference>
<dbReference type="InterPro" id="IPR006257">
    <property type="entry name" value="LAT1"/>
</dbReference>
<dbReference type="InterPro" id="IPR004167">
    <property type="entry name" value="PSBD"/>
</dbReference>
<dbReference type="InterPro" id="IPR011053">
    <property type="entry name" value="Single_hybrid_motif"/>
</dbReference>
<dbReference type="NCBIfam" id="TIGR01349">
    <property type="entry name" value="PDHac_trf_mito"/>
    <property type="match status" value="1"/>
</dbReference>
<dbReference type="PANTHER" id="PTHR23151">
    <property type="entry name" value="DIHYDROLIPOAMIDE ACETYL/SUCCINYL-TRANSFERASE-RELATED"/>
    <property type="match status" value="1"/>
</dbReference>
<dbReference type="PANTHER" id="PTHR23151:SF90">
    <property type="entry name" value="DIHYDROLIPOYLLYSINE-RESIDUE ACETYLTRANSFERASE COMPONENT OF PYRUVATE DEHYDROGENASE COMPLEX, MITOCHONDRIAL-RELATED"/>
    <property type="match status" value="1"/>
</dbReference>
<dbReference type="Pfam" id="PF00198">
    <property type="entry name" value="2-oxoacid_dh"/>
    <property type="match status" value="1"/>
</dbReference>
<dbReference type="Pfam" id="PF00364">
    <property type="entry name" value="Biotin_lipoyl"/>
    <property type="match status" value="2"/>
</dbReference>
<dbReference type="Pfam" id="PF02817">
    <property type="entry name" value="E3_binding"/>
    <property type="match status" value="1"/>
</dbReference>
<dbReference type="SUPFAM" id="SSF52777">
    <property type="entry name" value="CoA-dependent acyltransferases"/>
    <property type="match status" value="1"/>
</dbReference>
<dbReference type="SUPFAM" id="SSF47005">
    <property type="entry name" value="Peripheral subunit-binding domain of 2-oxo acid dehydrogenase complex"/>
    <property type="match status" value="1"/>
</dbReference>
<dbReference type="SUPFAM" id="SSF51230">
    <property type="entry name" value="Single hybrid motif"/>
    <property type="match status" value="2"/>
</dbReference>
<dbReference type="PROSITE" id="PS50968">
    <property type="entry name" value="BIOTINYL_LIPOYL"/>
    <property type="match status" value="2"/>
</dbReference>
<dbReference type="PROSITE" id="PS00189">
    <property type="entry name" value="LIPOYL"/>
    <property type="match status" value="2"/>
</dbReference>
<dbReference type="PROSITE" id="PS51826">
    <property type="entry name" value="PSBD"/>
    <property type="match status" value="1"/>
</dbReference>
<evidence type="ECO:0000250" key="1">
    <source>
        <dbReference type="UniProtKB" id="P08461"/>
    </source>
</evidence>
<evidence type="ECO:0000250" key="2">
    <source>
        <dbReference type="UniProtKB" id="P10515"/>
    </source>
</evidence>
<evidence type="ECO:0000250" key="3">
    <source>
        <dbReference type="UniProtKB" id="P11181"/>
    </source>
</evidence>
<evidence type="ECO:0000250" key="4">
    <source>
        <dbReference type="UniProtKB" id="Q8BMF4"/>
    </source>
</evidence>
<evidence type="ECO:0000250" key="5">
    <source>
        <dbReference type="UniProtKB" id="Q9N0F1"/>
    </source>
</evidence>
<evidence type="ECO:0000255" key="6"/>
<evidence type="ECO:0000255" key="7">
    <source>
        <dbReference type="PROSITE-ProRule" id="PRU01066"/>
    </source>
</evidence>
<evidence type="ECO:0000255" key="8">
    <source>
        <dbReference type="PROSITE-ProRule" id="PRU01170"/>
    </source>
</evidence>
<evidence type="ECO:0000256" key="9">
    <source>
        <dbReference type="SAM" id="MobiDB-lite"/>
    </source>
</evidence>
<evidence type="ECO:0000269" key="10">
    <source>
    </source>
</evidence>
<evidence type="ECO:0000269" key="11">
    <source>
    </source>
</evidence>
<evidence type="ECO:0000269" key="12">
    <source>
    </source>
</evidence>
<evidence type="ECO:0000305" key="13"/>
<evidence type="ECO:0000305" key="14">
    <source>
    </source>
</evidence>
<evidence type="ECO:0000305" key="15">
    <source>
    </source>
</evidence>
<evidence type="ECO:0007744" key="16">
    <source>
        <dbReference type="PDB" id="7UOM"/>
    </source>
</evidence>
<sequence length="647" mass="69067">MWRVCARRAQNAAPRAGFGARWTAFREEPGAPCVTPQAGSALARCSSKTPGYGRVRALCGWSPVSRATPRNRVLLQLWGSPSRRWYSLPPHQKVPLPSLSPTMQAGTIARWEKKEGEKINEGELIAEVETDKATVGFESVEECYMAKILVAEGTRDVPVGAIICITVDKPEDVEAFKNYTLDSSAAPAPPAAPAPTPAAPAPSPTPSAQAPGSSYPTHMQVLLPALSPTMTMGTVQRWEKKVGEKLNEGDLLAEIETDKATIGFEVQEEGYLAKILIPEGTRDVPLGTPLCIIVEKEADIPAFADYRPAEVTDLKPPAPPPIPSPAAPVPPAPQPVAPPPSAPRPAAPAGPKGRVFVSPLAKKLAAEKGIDLTQVKGTGPDGRIIKKDIDSFVPTKAAPTPAAAVPPPSPGVAPVPTGVFTDIPISNIRRVIAQRLMQSKQTIPHYYLSIDVNMGEVLLVRKELNKMLEGKSKISVNDFIIKASALACLKVPEANSSWMDTVIRQNHVVDISVAVSTPAGLITPIVFNAHIKGLETIANDVVSLATKAREGKLQPHEFQGGTFTISNLGMFGIKNFSAIINPPQACILAIGASEDRLVPADNEKGFDVASMMSVTLSCDHRVVDGAVGAQWLAEFRKYLEKPITMLL</sequence>
<protein>
    <recommendedName>
        <fullName evidence="2">Dihydrolipoyllysine-residue acetyltransferase component of pyruvate dehydrogenase complex</fullName>
        <ecNumber evidence="11">2.3.1.12</ecNumber>
    </recommendedName>
    <alternativeName>
        <fullName evidence="1">Dihydrolipoamide acetyltransferase component of pyruvate dehydrogenase complex</fullName>
    </alternativeName>
    <alternativeName>
        <fullName>Pyruvate dehydrogenase complex component E2</fullName>
        <shortName evidence="2">PDC-E2</shortName>
        <shortName>PDCE2</shortName>
    </alternativeName>
</protein>
<feature type="transit peptide" description="Mitochondrion" evidence="6">
    <location>
        <begin position="1"/>
        <end position="86"/>
    </location>
</feature>
<feature type="chain" id="PRO_0000162297" description="Dihydrolipoyllysine-residue acetyltransferase component of pyruvate dehydrogenase complex" evidence="6">
    <location>
        <begin position="87"/>
        <end position="647"/>
    </location>
</feature>
<feature type="domain" description="Lipoyl-binding 1" evidence="7">
    <location>
        <begin position="91"/>
        <end position="167"/>
    </location>
</feature>
<feature type="domain" description="Lipoyl-binding 2" evidence="7">
    <location>
        <begin position="218"/>
        <end position="294"/>
    </location>
</feature>
<feature type="domain" description="Peripheral subunit-binding (PSBD)" evidence="8">
    <location>
        <begin position="356"/>
        <end position="393"/>
    </location>
</feature>
<feature type="region of interest" description="Disordered" evidence="9">
    <location>
        <begin position="184"/>
        <end position="216"/>
    </location>
</feature>
<feature type="region of interest" description="Disordered" evidence="9">
    <location>
        <begin position="311"/>
        <end position="352"/>
    </location>
</feature>
<feature type="compositionally biased region" description="Pro residues" evidence="9">
    <location>
        <begin position="187"/>
        <end position="205"/>
    </location>
</feature>
<feature type="compositionally biased region" description="Pro residues" evidence="9">
    <location>
        <begin position="316"/>
        <end position="348"/>
    </location>
</feature>
<feature type="active site" evidence="5">
    <location>
        <position position="620"/>
    </location>
</feature>
<feature type="active site" evidence="5">
    <location>
        <position position="624"/>
    </location>
</feature>
<feature type="binding site" evidence="3">
    <location>
        <position position="461"/>
    </location>
    <ligand>
        <name>CoA</name>
        <dbReference type="ChEBI" id="CHEBI:57287"/>
    </ligand>
</feature>
<feature type="binding site" evidence="3">
    <location>
        <position position="475"/>
    </location>
    <ligand>
        <name>CoA</name>
        <dbReference type="ChEBI" id="CHEBI:57287"/>
    </ligand>
</feature>
<feature type="binding site" evidence="3">
    <location>
        <position position="566"/>
    </location>
    <ligand>
        <name>CoA</name>
        <dbReference type="ChEBI" id="CHEBI:57287"/>
    </ligand>
</feature>
<feature type="binding site" evidence="3">
    <location>
        <position position="567"/>
    </location>
    <ligand>
        <name>CoA</name>
        <dbReference type="ChEBI" id="CHEBI:57287"/>
    </ligand>
</feature>
<feature type="binding site" evidence="3">
    <location>
        <position position="591"/>
    </location>
    <ligand>
        <name>CoA</name>
        <dbReference type="ChEBI" id="CHEBI:57287"/>
    </ligand>
</feature>
<feature type="modified residue" description="Phosphoserine" evidence="2">
    <location>
        <position position="100"/>
    </location>
</feature>
<feature type="modified residue" description="N6-lipoyllysine" evidence="7 11">
    <location>
        <position position="132"/>
    </location>
</feature>
<feature type="modified residue" description="N6-lipoyllysine" evidence="7">
    <location>
        <position position="259"/>
    </location>
</feature>
<feature type="modified residue" description="N6-acetyllysine" evidence="2">
    <location>
        <position position="466"/>
    </location>
</feature>
<feature type="modified residue" description="N6-succinyllysine" evidence="4">
    <location>
        <position position="473"/>
    </location>
</feature>
<feature type="modified residue" description="N6-succinyllysine" evidence="4">
    <location>
        <position position="547"/>
    </location>
</feature>
<proteinExistence type="evidence at protein level"/>
<keyword id="KW-0002">3D-structure</keyword>
<keyword id="KW-0007">Acetylation</keyword>
<keyword id="KW-0012">Acyltransferase</keyword>
<keyword id="KW-0119">Carbohydrate metabolism</keyword>
<keyword id="KW-0903">Direct protein sequencing</keyword>
<keyword id="KW-0313">Glucose metabolism</keyword>
<keyword id="KW-0450">Lipoyl</keyword>
<keyword id="KW-0496">Mitochondrion</keyword>
<keyword id="KW-0597">Phosphoprotein</keyword>
<keyword id="KW-1185">Reference proteome</keyword>
<keyword id="KW-0677">Repeat</keyword>
<keyword id="KW-0808">Transferase</keyword>
<keyword id="KW-0809">Transit peptide</keyword>
<keyword id="KW-0816">Tricarboxylic acid cycle</keyword>
<comment type="function">
    <text evidence="11 14">As part of the pyruvate dehydrogenase complex, catalyzes the transfers of an acetyl group to a lipoic acid moiety (PubMed:3117054). The pyruvate dehydrogenase complex, catalyzes the overall conversion of pyruvate to acetyl-CoA and CO(2), and thereby links cytoplasmic glycolysis and the mitochondrial tricarboxylic acid (TCA) cycle (Probable).</text>
</comment>
<comment type="catalytic activity">
    <reaction evidence="11">
        <text>N(6)-[(R)-dihydrolipoyl]-L-lysyl-[protein] + acetyl-CoA = N(6)-[(R)-S(8)-acetyldihydrolipoyl]-L-lysyl-[protein] + CoA</text>
        <dbReference type="Rhea" id="RHEA:17017"/>
        <dbReference type="Rhea" id="RHEA-COMP:10475"/>
        <dbReference type="Rhea" id="RHEA-COMP:10478"/>
        <dbReference type="ChEBI" id="CHEBI:57287"/>
        <dbReference type="ChEBI" id="CHEBI:57288"/>
        <dbReference type="ChEBI" id="CHEBI:83100"/>
        <dbReference type="ChEBI" id="CHEBI:83111"/>
        <dbReference type="EC" id="2.3.1.12"/>
    </reaction>
    <physiologicalReaction direction="left-to-right" evidence="11">
        <dbReference type="Rhea" id="RHEA:17018"/>
    </physiologicalReaction>
</comment>
<comment type="cofactor">
    <cofactor evidence="11">
        <name>(R)-lipoate</name>
        <dbReference type="ChEBI" id="CHEBI:83088"/>
    </cofactor>
    <text evidence="14">Binds 2 lipoyl cofactors covalently.</text>
</comment>
<comment type="subunit">
    <text evidence="2 10 12 15">Part of the pyruvate dehydrogenase complex (PDHc) that is a multi-enzyme complex composed of multiple copies of three enzymes, pyruvate dehydrogenase (subunits PDH1A and PDHB, E1 component), dihydrolipoamide acetyltransferase (DLAT, E2 component), and dihydrolipoamide dehydrogenase (DLD, E3 component) to which is added an additional protein the E3-binding protein (PDHX, E3BP) (Probable). In terms of structural architecture, the E2 and E3BP components assemble into a 60meric central core with icosahedral symmetry (PubMed:20361979, PubMed:36414632). The central core is decorated with E1 and E3 proteins (Probable). Currently, two alternative models for the E2:E3BP stoichiometry are considered as being either 48:12 (E2(48)-E3BP(12)) or 40:20 (E2(40)-E3BP(20)). Interacts with PDK2 and PDK3. Interacts with SIRT4. Interacts with PDHB (By similarity).</text>
</comment>
<comment type="subcellular location">
    <subcellularLocation>
        <location evidence="1">Mitochondrion matrix</location>
    </subcellularLocation>
</comment>
<comment type="PTM">
    <text evidence="2">Delipoylated at Lys-132 and Lys-259 by SIRT4, delipoylation decreases the PHD complex activity.</text>
</comment>
<comment type="similarity">
    <text evidence="13">Belongs to the 2-oxoacid dehydrogenase family.</text>
</comment>
<accession>P11180</accession>
<accession>F1N690</accession>
<accession>V6F7T1</accession>
<name>ODP2_BOVIN</name>
<reference key="1">
    <citation type="journal article" date="2009" name="Genome Biol.">
        <title>A whole-genome assembly of the domestic cow, Bos taurus.</title>
        <authorList>
            <person name="Zimin A.V."/>
            <person name="Delcher A.L."/>
            <person name="Florea L."/>
            <person name="Kelley D.R."/>
            <person name="Schatz M.C."/>
            <person name="Puiu D."/>
            <person name="Hanrahan F."/>
            <person name="Pertea G."/>
            <person name="Van Tassell C.P."/>
            <person name="Sonstegard T.S."/>
            <person name="Marcais G."/>
            <person name="Roberts M."/>
            <person name="Subramanian P."/>
            <person name="Yorke J.A."/>
            <person name="Salzberg S.L."/>
        </authorList>
    </citation>
    <scope>NUCLEOTIDE SEQUENCE [LARGE SCALE GENOMIC DNA]</scope>
    <source>
        <strain>Hereford</strain>
    </source>
</reference>
<reference key="2">
    <citation type="journal article" date="1987" name="Biochem. J.">
        <title>Primary structure around the lipoate-attachment site on the E2 component of bovine heart pyruvate dehydrogenase complex.</title>
        <authorList>
            <person name="Bradford A.P."/>
            <person name="Howell S."/>
            <person name="Aitken A."/>
            <person name="James L.A."/>
            <person name="Yeaman S.J."/>
        </authorList>
    </citation>
    <scope>PROTEIN SEQUENCE OF 128-137</scope>
    <scope>LIPOYLATION AT LYS-132</scope>
    <scope>FUNCTION</scope>
    <scope>CATALYTIC ACTIVITY</scope>
    <scope>COFACTOR</scope>
</reference>
<reference key="3">
    <citation type="journal article" date="2010" name="J. Mol. Biol.">
        <title>Solution structure and characterisation of the human pyruvate dehydrogenase complex core assembly.</title>
        <authorList>
            <person name="Vijayakrishnan S."/>
            <person name="Kelly S.M."/>
            <person name="Gilbert R.J."/>
            <person name="Callow P."/>
            <person name="Bhella D."/>
            <person name="Forsyth T."/>
            <person name="Lindsay J.G."/>
            <person name="Byron O."/>
        </authorList>
    </citation>
    <scope>SUBUNIT</scope>
</reference>
<reference evidence="16" key="4">
    <citation type="journal article" date="2022" name="Cell Discov.">
        <title>Structures and comparison of endogenous 2-oxoglutarate and pyruvate dehydrogenase complexes from bovine kidney.</title>
        <authorList>
            <person name="Liu S."/>
            <person name="Xia X."/>
            <person name="Zhen J."/>
            <person name="Li Z."/>
            <person name="Zhou Z.H."/>
        </authorList>
    </citation>
    <scope>STRUCTURE BY ELECTRON MICROSCOPY (3.80 ANGSTROMS)</scope>
    <scope>SUBUNIT</scope>
</reference>